<comment type="subcellular location">
    <subcellularLocation>
        <location evidence="4">Secreted</location>
    </subcellularLocation>
</comment>
<comment type="tissue specificity">
    <text evidence="4">Expressed by the venom gland.</text>
</comment>
<comment type="PTM">
    <text evidence="3">Contains 8 disulfide bonds.</text>
</comment>
<comment type="similarity">
    <text evidence="3">Belongs to the scoloptoxin-11 family.</text>
</comment>
<comment type="caution">
    <text evidence="4">All S.morsitans family members described in 'Undeheim et al., 2014' have not been imported into UniProtKB. Please, refer to this paper to access them.</text>
</comment>
<comment type="online information" name="National Center for Biotechnology Information (NCBI)">
    <link uri="https://www.ncbi.nlm.nih.gov/nuccore/GASH01000127"/>
</comment>
<evidence type="ECO:0000255" key="1"/>
<evidence type="ECO:0000303" key="2">
    <source>
    </source>
</evidence>
<evidence type="ECO:0000305" key="3"/>
<evidence type="ECO:0000305" key="4">
    <source>
    </source>
</evidence>
<accession>P0DQA0</accession>
<sequence length="222" mass="25350">RRVFTLTFLFLAAEAFHLSDRIETRESETGKGLATCKKDSICAYLQQNARGVTPAHMCECPGEQTCPLSWDPDDGKTLTRGDEQYKFCSSPPQALHECKEKELVFTSKFEYEANSNPRKFLSYAGYIHCACPIGFSYHLTRRTNSTTEGQDLETVYFSCEEYKTCGTNDTCHIISESSEAFMIYKMCNCDEDLKCPTDPEAAFRTDHIEQVLDYNLYNMQCQ</sequence>
<organism>
    <name type="scientific">Scolopendra morsitans</name>
    <name type="common">Tanzanian blue ringleg centipede</name>
    <dbReference type="NCBI Taxonomy" id="943129"/>
    <lineage>
        <taxon>Eukaryota</taxon>
        <taxon>Metazoa</taxon>
        <taxon>Ecdysozoa</taxon>
        <taxon>Arthropoda</taxon>
        <taxon>Myriapoda</taxon>
        <taxon>Chilopoda</taxon>
        <taxon>Pleurostigmophora</taxon>
        <taxon>Scolopendromorpha</taxon>
        <taxon>Scolopendridae</taxon>
        <taxon>Scolopendra</taxon>
    </lineage>
</organism>
<dbReference type="SMR" id="P0DQA0"/>
<dbReference type="GO" id="GO:0005576">
    <property type="term" value="C:extracellular region"/>
    <property type="evidence" value="ECO:0007669"/>
    <property type="project" value="UniProtKB-SubCell"/>
</dbReference>
<dbReference type="GO" id="GO:0090729">
    <property type="term" value="F:toxin activity"/>
    <property type="evidence" value="ECO:0007669"/>
    <property type="project" value="UniProtKB-KW"/>
</dbReference>
<dbReference type="Gene3D" id="2.20.20.160">
    <property type="match status" value="1"/>
</dbReference>
<proteinExistence type="evidence at transcript level"/>
<reference key="1">
    <citation type="journal article" date="2014" name="Mol. Biol. Evol.">
        <title>Clawing through evolution: toxin diversification and convergence in the ancient lineage Chilopoda (centipedes).</title>
        <authorList>
            <person name="Undheim E.A."/>
            <person name="Jones A."/>
            <person name="Clauser K.R."/>
            <person name="Holland J.W."/>
            <person name="Pineda S.S."/>
            <person name="King G.F."/>
            <person name="Fry B.G."/>
        </authorList>
    </citation>
    <scope>NUCLEOTIDE SEQUENCE [MRNA]</scope>
    <scope>NOMENCLATURE</scope>
    <source>
        <tissue>Venom gland</tissue>
    </source>
</reference>
<feature type="signal peptide" evidence="1">
    <location>
        <begin position="1" status="less than"/>
        <end status="unknown"/>
    </location>
</feature>
<feature type="chain" id="PRO_0000446775" description="U-scoloptoxin(11)-Sm5a" evidence="3">
    <location>
        <begin status="unknown"/>
        <end position="222"/>
    </location>
</feature>
<feature type="non-terminal residue">
    <location>
        <position position="1"/>
    </location>
</feature>
<protein>
    <recommendedName>
        <fullName evidence="2">U-scoloptoxin(11)-Sm5a</fullName>
        <shortName evidence="2">U-SLPTX(11)-Sm5a</shortName>
    </recommendedName>
</protein>
<keyword id="KW-1015">Disulfide bond</keyword>
<keyword id="KW-0964">Secreted</keyword>
<keyword id="KW-0732">Signal</keyword>
<keyword id="KW-0800">Toxin</keyword>
<name>TXB5A_SCOMO</name>